<reference key="1">
    <citation type="submission" date="2006-06" db="EMBL/GenBank/DDBJ databases">
        <authorList>
            <consortium name="NIH - Mammalian Gene Collection (MGC) project"/>
        </authorList>
    </citation>
    <scope>NUCLEOTIDE SEQUENCE [LARGE SCALE MRNA]</scope>
    <source>
        <strain>Hereford</strain>
        <tissue>Fetal pons</tissue>
    </source>
</reference>
<accession>Q17QE0</accession>
<sequence length="138" mass="15070">MCSAGQLLGGGGGGGGSGGERDEDRDALAERAAAGTEQESGASPRRRGRRPLEEREQDIEESQNHTGEPVGDDYKKMGTLFGELNKSLLNMGFTRMYFGEQIVEPVIVIFFWVMLWFLGLPAFGLVALLCLVIIYVQQ</sequence>
<feature type="chain" id="PRO_0000286628" description="Uncharacterized protein FAM241A">
    <location>
        <begin position="1"/>
        <end position="138"/>
    </location>
</feature>
<feature type="transmembrane region" description="Helical" evidence="1">
    <location>
        <begin position="106"/>
        <end position="126"/>
    </location>
</feature>
<feature type="region of interest" description="Disordered" evidence="2">
    <location>
        <begin position="1"/>
        <end position="73"/>
    </location>
</feature>
<feature type="compositionally biased region" description="Gly residues" evidence="2">
    <location>
        <begin position="7"/>
        <end position="18"/>
    </location>
</feature>
<feature type="compositionally biased region" description="Basic and acidic residues" evidence="2">
    <location>
        <begin position="19"/>
        <end position="29"/>
    </location>
</feature>
<feature type="compositionally biased region" description="Low complexity" evidence="2">
    <location>
        <begin position="30"/>
        <end position="43"/>
    </location>
</feature>
<name>F241A_BOVIN</name>
<evidence type="ECO:0000255" key="1"/>
<evidence type="ECO:0000256" key="2">
    <source>
        <dbReference type="SAM" id="MobiDB-lite"/>
    </source>
</evidence>
<evidence type="ECO:0000305" key="3"/>
<comment type="subcellular location">
    <subcellularLocation>
        <location evidence="3">Membrane</location>
        <topology evidence="1">Single-pass membrane protein</topology>
    </subcellularLocation>
</comment>
<comment type="similarity">
    <text evidence="3">Belongs to the FAM241 family.</text>
</comment>
<keyword id="KW-0472">Membrane</keyword>
<keyword id="KW-1185">Reference proteome</keyword>
<keyword id="KW-0812">Transmembrane</keyword>
<keyword id="KW-1133">Transmembrane helix</keyword>
<protein>
    <recommendedName>
        <fullName>Uncharacterized protein FAM241A</fullName>
    </recommendedName>
</protein>
<organism>
    <name type="scientific">Bos taurus</name>
    <name type="common">Bovine</name>
    <dbReference type="NCBI Taxonomy" id="9913"/>
    <lineage>
        <taxon>Eukaryota</taxon>
        <taxon>Metazoa</taxon>
        <taxon>Chordata</taxon>
        <taxon>Craniata</taxon>
        <taxon>Vertebrata</taxon>
        <taxon>Euteleostomi</taxon>
        <taxon>Mammalia</taxon>
        <taxon>Eutheria</taxon>
        <taxon>Laurasiatheria</taxon>
        <taxon>Artiodactyla</taxon>
        <taxon>Ruminantia</taxon>
        <taxon>Pecora</taxon>
        <taxon>Bovidae</taxon>
        <taxon>Bovinae</taxon>
        <taxon>Bos</taxon>
    </lineage>
</organism>
<dbReference type="EMBL" id="BC118416">
    <property type="protein sequence ID" value="AAI18417.1"/>
    <property type="molecule type" value="mRNA"/>
</dbReference>
<dbReference type="RefSeq" id="NP_001070429.1">
    <property type="nucleotide sequence ID" value="NM_001076961.2"/>
</dbReference>
<dbReference type="SMR" id="Q17QE0"/>
<dbReference type="FunCoup" id="Q17QE0">
    <property type="interactions" value="237"/>
</dbReference>
<dbReference type="PaxDb" id="9913-ENSBTAP00000023103"/>
<dbReference type="GeneID" id="767842"/>
<dbReference type="KEGG" id="bta:767842"/>
<dbReference type="CTD" id="132720"/>
<dbReference type="eggNOG" id="ENOG502S3RI">
    <property type="taxonomic scope" value="Eukaryota"/>
</dbReference>
<dbReference type="HOGENOM" id="CLU_160107_0_0_1"/>
<dbReference type="InParanoid" id="Q17QE0"/>
<dbReference type="OrthoDB" id="9903800at2759"/>
<dbReference type="TreeFam" id="TF335755"/>
<dbReference type="Proteomes" id="UP000009136">
    <property type="component" value="Unplaced"/>
</dbReference>
<dbReference type="GO" id="GO:0043231">
    <property type="term" value="C:intracellular membrane-bounded organelle"/>
    <property type="evidence" value="ECO:0000318"/>
    <property type="project" value="GO_Central"/>
</dbReference>
<dbReference type="GO" id="GO:0016020">
    <property type="term" value="C:membrane"/>
    <property type="evidence" value="ECO:0007669"/>
    <property type="project" value="UniProtKB-SubCell"/>
</dbReference>
<dbReference type="InterPro" id="IPR027953">
    <property type="entry name" value="DUF4605"/>
</dbReference>
<dbReference type="InterPro" id="IPR052502">
    <property type="entry name" value="FAM241_domain"/>
</dbReference>
<dbReference type="PANTHER" id="PTHR33690">
    <property type="entry name" value="DUF4605 DOMAIN-CONTAINING PROTEIN"/>
    <property type="match status" value="1"/>
</dbReference>
<dbReference type="PANTHER" id="PTHR33690:SF1">
    <property type="entry name" value="FAMILY WITH SEQUENCE SIMILARITY 241 MEMBER A"/>
    <property type="match status" value="1"/>
</dbReference>
<dbReference type="Pfam" id="PF15378">
    <property type="entry name" value="DUF4605"/>
    <property type="match status" value="1"/>
</dbReference>
<proteinExistence type="evidence at transcript level"/>
<gene>
    <name type="primary">FAM241A</name>
</gene>